<keyword id="KW-0052">Apoplast</keyword>
<keyword id="KW-0119">Carbohydrate metabolism</keyword>
<keyword id="KW-0134">Cell wall</keyword>
<keyword id="KW-0961">Cell wall biogenesis/degradation</keyword>
<keyword id="KW-0903">Direct protein sequencing</keyword>
<keyword id="KW-0325">Glycoprotein</keyword>
<keyword id="KW-0326">Glycosidase</keyword>
<keyword id="KW-0378">Hydrolase</keyword>
<keyword id="KW-0624">Polysaccharide degradation</keyword>
<keyword id="KW-1185">Reference proteome</keyword>
<keyword id="KW-0964">Secreted</keyword>
<keyword id="KW-0732">Signal</keyword>
<sequence length="915" mass="102399">MASSSSSLAFSLSLLLALILCFSPTQSYKTIGKGYRLVSIEESPDGGFIGYLQVKQKNKIYGSDITTLRLFVKHETDSRLRVHITDAKQQRWEVPYNLLPREQPPQVGKVIGKSRKSPITVQEISGSELIFSYTTDPFTFAVKRRSNHETLFNTTSSLVFKDQYLEISTSLPKEASLYGLGENSQANGIKLVPNEPYTLYTEDVSAINLNTDLYGSHPMYMDLRNVGGKAYAHAVLLLNSNGMDVFYRGDSLTYKVIGGVFDFYFIAGPSPLNVVDQYTQLIGRPAPMPYWSLGFHQCRWGYHNLSVVEDVVDNYKKAKIPLDVIWNDDDHMDGHKDFTLNPVAYPRAKLLAFLDKIHKIGMKYIVINDPGIGVNASYGTFQRAMAADVFIKYEGKPFLAQVWPGPVYFPDFLNPKTVSWWGDEIKRFHDLVPIDGLWIDMNEVSNFCSGLCTIPEGKQCPSGEGPGWVCCLDCKNITKTRWDDPPYKINATGVVAPVGFKTIATSATHYNGVREYDAHSIYGFSETIATHKGLLNVQGKRPFILSRSTFVGSGQYAAHWTGDNQGTWQSLQVSISTMLNFGIFGVPMVGSDICGFYPQPTEELCNRWIEVGAFYPFSRDHANYYSPRQELYQWDTVADSARNALGMRYKILPFLYTLNYEAHMTGAPIARPLFFSFPEYTECYGNSRQFLLGSSFMISPVLEQGKTEVEALFPPGSWYHMFDMTQAVVSKNGKRVTLPAPLNFVNVHLYQNTILPTQQGGLISKDARTTPFSLVIAFPAGASEGYATGKLYLDEDELPEMKLGNGQSTYVDFYASVGNGTMKMWSQVKEGKFALSKGWVIEKVSVLGLRGAGQVSEIQINGSPMTKKIEVSSKEHTYVIGLEDEEENKSVMVEVRGLEMLVGKDFNMSWKMGIN</sequence>
<dbReference type="EC" id="3.2.1.177"/>
<dbReference type="EMBL" id="AF144078">
    <property type="protein sequence ID" value="AAD37363.1"/>
    <property type="molecule type" value="Genomic_DNA"/>
</dbReference>
<dbReference type="EMBL" id="AF087483">
    <property type="protein sequence ID" value="AAD05539.1"/>
    <property type="molecule type" value="mRNA"/>
</dbReference>
<dbReference type="EMBL" id="AC008075">
    <property type="protein sequence ID" value="AAD49987.1"/>
    <property type="molecule type" value="Genomic_DNA"/>
</dbReference>
<dbReference type="EMBL" id="CP002684">
    <property type="protein sequence ID" value="AEE34811.1"/>
    <property type="molecule type" value="Genomic_DNA"/>
</dbReference>
<dbReference type="EMBL" id="AY057482">
    <property type="protein sequence ID" value="AAL09716.1"/>
    <property type="molecule type" value="mRNA"/>
</dbReference>
<dbReference type="EMBL" id="BT002675">
    <property type="protein sequence ID" value="AAO11591.1"/>
    <property type="molecule type" value="mRNA"/>
</dbReference>
<dbReference type="PIR" id="H96709">
    <property type="entry name" value="H96709"/>
</dbReference>
<dbReference type="RefSeq" id="NP_177023.1">
    <property type="nucleotide sequence ID" value="NM_105527.5"/>
</dbReference>
<dbReference type="SMR" id="Q9S7Y7"/>
<dbReference type="BioGRID" id="28406">
    <property type="interactions" value="3"/>
</dbReference>
<dbReference type="FunCoup" id="Q9S7Y7">
    <property type="interactions" value="1700"/>
</dbReference>
<dbReference type="IntAct" id="Q9S7Y7">
    <property type="interactions" value="2"/>
</dbReference>
<dbReference type="STRING" id="3702.Q9S7Y7"/>
<dbReference type="CAZy" id="GH31">
    <property type="family name" value="Glycoside Hydrolase Family 31"/>
</dbReference>
<dbReference type="GlyCosmos" id="Q9S7Y7">
    <property type="glycosylation" value="8 sites, No reported glycans"/>
</dbReference>
<dbReference type="GlyGen" id="Q9S7Y7">
    <property type="glycosylation" value="8 sites"/>
</dbReference>
<dbReference type="iPTMnet" id="Q9S7Y7"/>
<dbReference type="PaxDb" id="3702-AT1G68560.1"/>
<dbReference type="ProteomicsDB" id="242411"/>
<dbReference type="EnsemblPlants" id="AT1G68560.1">
    <property type="protein sequence ID" value="AT1G68560.1"/>
    <property type="gene ID" value="AT1G68560"/>
</dbReference>
<dbReference type="GeneID" id="843185"/>
<dbReference type="Gramene" id="AT1G68560.1">
    <property type="protein sequence ID" value="AT1G68560.1"/>
    <property type="gene ID" value="AT1G68560"/>
</dbReference>
<dbReference type="KEGG" id="ath:AT1G68560"/>
<dbReference type="Araport" id="AT1G68560"/>
<dbReference type="TAIR" id="AT1G68560">
    <property type="gene designation" value="XYL1"/>
</dbReference>
<dbReference type="eggNOG" id="KOG1065">
    <property type="taxonomic scope" value="Eukaryota"/>
</dbReference>
<dbReference type="HOGENOM" id="CLU_000631_11_1_1"/>
<dbReference type="InParanoid" id="Q9S7Y7"/>
<dbReference type="OMA" id="PYVINHD"/>
<dbReference type="PhylomeDB" id="Q9S7Y7"/>
<dbReference type="BioCyc" id="ARA:AT1G68560-MONOMER"/>
<dbReference type="BRENDA" id="3.2.1.177">
    <property type="organism ID" value="399"/>
</dbReference>
<dbReference type="CD-CODE" id="4299E36E">
    <property type="entry name" value="Nucleolus"/>
</dbReference>
<dbReference type="PRO" id="PR:Q9S7Y7"/>
<dbReference type="Proteomes" id="UP000006548">
    <property type="component" value="Chromosome 1"/>
</dbReference>
<dbReference type="ExpressionAtlas" id="Q9S7Y7">
    <property type="expression patterns" value="baseline and differential"/>
</dbReference>
<dbReference type="GO" id="GO:0048046">
    <property type="term" value="C:apoplast"/>
    <property type="evidence" value="ECO:0000314"/>
    <property type="project" value="TAIR"/>
</dbReference>
<dbReference type="GO" id="GO:0005739">
    <property type="term" value="C:mitochondrion"/>
    <property type="evidence" value="ECO:0007005"/>
    <property type="project" value="TAIR"/>
</dbReference>
<dbReference type="GO" id="GO:0009505">
    <property type="term" value="C:plant-type cell wall"/>
    <property type="evidence" value="ECO:0007005"/>
    <property type="project" value="TAIR"/>
</dbReference>
<dbReference type="GO" id="GO:0009506">
    <property type="term" value="C:plasmodesma"/>
    <property type="evidence" value="ECO:0007005"/>
    <property type="project" value="TAIR"/>
</dbReference>
<dbReference type="GO" id="GO:0061634">
    <property type="term" value="F:alpha-D-xyloside xylohydrolase"/>
    <property type="evidence" value="ECO:0007669"/>
    <property type="project" value="UniProtKB-EC"/>
</dbReference>
<dbReference type="GO" id="GO:0046556">
    <property type="term" value="F:alpha-L-arabinofuranosidase activity"/>
    <property type="evidence" value="ECO:0000314"/>
    <property type="project" value="TAIR"/>
</dbReference>
<dbReference type="GO" id="GO:0030246">
    <property type="term" value="F:carbohydrate binding"/>
    <property type="evidence" value="ECO:0007669"/>
    <property type="project" value="InterPro"/>
</dbReference>
<dbReference type="GO" id="GO:0009044">
    <property type="term" value="F:xylan 1,4-beta-xylosidase activity"/>
    <property type="evidence" value="ECO:0000314"/>
    <property type="project" value="TAIR"/>
</dbReference>
<dbReference type="GO" id="GO:0080176">
    <property type="term" value="F:xyloglucan 1,6-alpha-xylosidase activity"/>
    <property type="evidence" value="ECO:0000314"/>
    <property type="project" value="TAIR"/>
</dbReference>
<dbReference type="GO" id="GO:0071555">
    <property type="term" value="P:cell wall organization"/>
    <property type="evidence" value="ECO:0007669"/>
    <property type="project" value="UniProtKB-KW"/>
</dbReference>
<dbReference type="GO" id="GO:0046686">
    <property type="term" value="P:response to cadmium ion"/>
    <property type="evidence" value="ECO:0000270"/>
    <property type="project" value="TAIR"/>
</dbReference>
<dbReference type="GO" id="GO:0045493">
    <property type="term" value="P:xylan catabolic process"/>
    <property type="evidence" value="ECO:0000314"/>
    <property type="project" value="TAIR"/>
</dbReference>
<dbReference type="GO" id="GO:0010411">
    <property type="term" value="P:xyloglucan metabolic process"/>
    <property type="evidence" value="ECO:0000315"/>
    <property type="project" value="TAIR"/>
</dbReference>
<dbReference type="CDD" id="cd06602">
    <property type="entry name" value="GH31_MGAM_SI_GAA"/>
    <property type="match status" value="1"/>
</dbReference>
<dbReference type="CDD" id="cd14752">
    <property type="entry name" value="GH31_N"/>
    <property type="match status" value="1"/>
</dbReference>
<dbReference type="FunFam" id="2.60.40.1180:FF:000044">
    <property type="entry name" value="Alpha-glucosidase 1"/>
    <property type="match status" value="1"/>
</dbReference>
<dbReference type="FunFam" id="2.60.40.1760:FF:000006">
    <property type="entry name" value="Alpha-glucosidase 1"/>
    <property type="match status" value="1"/>
</dbReference>
<dbReference type="FunFam" id="2.60.40.1180:FF:000075">
    <property type="entry name" value="Alpha-xylosidase 1"/>
    <property type="match status" value="1"/>
</dbReference>
<dbReference type="FunFam" id="3.20.20.80:FF:000016">
    <property type="entry name" value="Maltase-glucoamylase, intestinal"/>
    <property type="match status" value="1"/>
</dbReference>
<dbReference type="Gene3D" id="3.20.20.80">
    <property type="entry name" value="Glycosidases"/>
    <property type="match status" value="1"/>
</dbReference>
<dbReference type="Gene3D" id="2.60.40.1760">
    <property type="entry name" value="glycosyl hydrolase (family 31)"/>
    <property type="match status" value="1"/>
</dbReference>
<dbReference type="Gene3D" id="2.60.40.1180">
    <property type="entry name" value="Golgi alpha-mannosidase II"/>
    <property type="match status" value="2"/>
</dbReference>
<dbReference type="InterPro" id="IPR011013">
    <property type="entry name" value="Gal_mutarotase_sf_dom"/>
</dbReference>
<dbReference type="InterPro" id="IPR030458">
    <property type="entry name" value="Glyco_hydro_31_AS"/>
</dbReference>
<dbReference type="InterPro" id="IPR048395">
    <property type="entry name" value="Glyco_hydro_31_C"/>
</dbReference>
<dbReference type="InterPro" id="IPR025887">
    <property type="entry name" value="Glyco_hydro_31_N_dom"/>
</dbReference>
<dbReference type="InterPro" id="IPR000322">
    <property type="entry name" value="Glyco_hydro_31_TIM"/>
</dbReference>
<dbReference type="InterPro" id="IPR013780">
    <property type="entry name" value="Glyco_hydro_b"/>
</dbReference>
<dbReference type="InterPro" id="IPR017853">
    <property type="entry name" value="Glycoside_hydrolase_SF"/>
</dbReference>
<dbReference type="PANTHER" id="PTHR22762">
    <property type="entry name" value="ALPHA-GLUCOSIDASE"/>
    <property type="match status" value="1"/>
</dbReference>
<dbReference type="PANTHER" id="PTHR22762:SF127">
    <property type="entry name" value="ALPHA-XYLOSIDASE 1-RELATED"/>
    <property type="match status" value="1"/>
</dbReference>
<dbReference type="Pfam" id="PF13802">
    <property type="entry name" value="Gal_mutarotas_2"/>
    <property type="match status" value="1"/>
</dbReference>
<dbReference type="Pfam" id="PF01055">
    <property type="entry name" value="Glyco_hydro_31_2nd"/>
    <property type="match status" value="1"/>
</dbReference>
<dbReference type="Pfam" id="PF21365">
    <property type="entry name" value="Glyco_hydro_31_3rd"/>
    <property type="match status" value="1"/>
</dbReference>
<dbReference type="SUPFAM" id="SSF51445">
    <property type="entry name" value="(Trans)glycosidases"/>
    <property type="match status" value="1"/>
</dbReference>
<dbReference type="SUPFAM" id="SSF74650">
    <property type="entry name" value="Galactose mutarotase-like"/>
    <property type="match status" value="1"/>
</dbReference>
<dbReference type="SUPFAM" id="SSF51011">
    <property type="entry name" value="Glycosyl hydrolase domain"/>
    <property type="match status" value="1"/>
</dbReference>
<dbReference type="PROSITE" id="PS00129">
    <property type="entry name" value="GLYCOSYL_HYDROL_F31_1"/>
    <property type="match status" value="1"/>
</dbReference>
<accession>Q9S7Y7</accession>
<accession>P80846</accession>
<accession>Q9ZP26</accession>
<gene>
    <name evidence="12" type="primary">XYL1</name>
    <name type="synonym">AXY3</name>
    <name type="ordered locus">At1g68560</name>
    <name type="ORF">F24J5.20</name>
</gene>
<organism>
    <name type="scientific">Arabidopsis thaliana</name>
    <name type="common">Mouse-ear cress</name>
    <dbReference type="NCBI Taxonomy" id="3702"/>
    <lineage>
        <taxon>Eukaryota</taxon>
        <taxon>Viridiplantae</taxon>
        <taxon>Streptophyta</taxon>
        <taxon>Embryophyta</taxon>
        <taxon>Tracheophyta</taxon>
        <taxon>Spermatophyta</taxon>
        <taxon>Magnoliopsida</taxon>
        <taxon>eudicotyledons</taxon>
        <taxon>Gunneridae</taxon>
        <taxon>Pentapetalae</taxon>
        <taxon>rosids</taxon>
        <taxon>malvids</taxon>
        <taxon>Brassicales</taxon>
        <taxon>Brassicaceae</taxon>
        <taxon>Camelineae</taxon>
        <taxon>Arabidopsis</taxon>
    </lineage>
</organism>
<proteinExistence type="evidence at protein level"/>
<comment type="function">
    <text evidence="4 7 8">Glycoside hydrolase releasing xylosyl residues from xyloglucan oligosaccharides at the non-reducing end. Has alpha-xylosidase activity against xylan oligosaccharides. Also has alpha-glucosidase activity against p-nitrophenyl-alpha-D-glucopyranoside. No activity against p-nitrophenyl-D-xyloside.</text>
</comment>
<comment type="catalytic activity">
    <reaction>
        <text>Hydrolysis of terminal, non-reducing alpha-D-xylose residues with release of alpha-D-xylose.</text>
        <dbReference type="EC" id="3.2.1.177"/>
    </reaction>
</comment>
<comment type="subcellular location">
    <subcellularLocation>
        <location>Secreted</location>
        <location>Cell wall</location>
    </subcellularLocation>
    <subcellularLocation>
        <location>Secreted</location>
        <location>Extracellular space</location>
        <location>Apoplast</location>
    </subcellularLocation>
</comment>
<comment type="tissue specificity">
    <text evidence="6 7">Expressed in roots, stems, leaves, flowers and siliques. Expressed in cell types undergoing cell wall modifications, including trichomes, vasculature, stomata, and elongating anther filaments. Not detected in pollen.</text>
</comment>
<comment type="developmental stage">
    <text evidence="4">Expressed at higher levels in younger, faster growing leaves than in older, slower growing leaves.</text>
</comment>
<comment type="disruption phenotype">
    <text evidence="6 7 8">No visible growth or morphological phenotypes, with the exception of shorter siliques. Loss of alpha-xylosidase activity and altered xyloglucan composition.</text>
</comment>
<comment type="similarity">
    <text evidence="2">Belongs to the glycosyl hydrolase 31 family.</text>
</comment>
<name>XYL1_ARATH</name>
<reference evidence="10 12" key="1">
    <citation type="journal article" date="2001" name="Plant Physiol.">
        <title>Cloning and expression pattern of a gene encoding an alpha-xylosidase active against xyloglucan oligosaccharides from Arabidopsis.</title>
        <authorList>
            <person name="Sampedro J."/>
            <person name="Sieiro C."/>
            <person name="Revilla G."/>
            <person name="Gonzalez-Villa T."/>
            <person name="Zarra I."/>
        </authorList>
    </citation>
    <scope>NUCLEOTIDE SEQUENCE [GENOMIC DNA / MRNA]</scope>
    <scope>FUNCTION</scope>
    <scope>SUBCELLULAR LOCATION</scope>
    <scope>DEVELOPMENTAL STAGE</scope>
    <source>
        <strain evidence="4">cv. Columbia</strain>
        <tissue evidence="11">Seedling hypocotyl</tissue>
    </source>
</reference>
<reference evidence="10 13" key="2">
    <citation type="journal article" date="2000" name="Nature">
        <title>Sequence and analysis of chromosome 1 of the plant Arabidopsis thaliana.</title>
        <authorList>
            <person name="Theologis A."/>
            <person name="Ecker J.R."/>
            <person name="Palm C.J."/>
            <person name="Federspiel N.A."/>
            <person name="Kaul S."/>
            <person name="White O."/>
            <person name="Alonso J."/>
            <person name="Altafi H."/>
            <person name="Araujo R."/>
            <person name="Bowman C.L."/>
            <person name="Brooks S.Y."/>
            <person name="Buehler E."/>
            <person name="Chan A."/>
            <person name="Chao Q."/>
            <person name="Chen H."/>
            <person name="Cheuk R.F."/>
            <person name="Chin C.W."/>
            <person name="Chung M.K."/>
            <person name="Conn L."/>
            <person name="Conway A.B."/>
            <person name="Conway A.R."/>
            <person name="Creasy T.H."/>
            <person name="Dewar K."/>
            <person name="Dunn P."/>
            <person name="Etgu P."/>
            <person name="Feldblyum T.V."/>
            <person name="Feng J.-D."/>
            <person name="Fong B."/>
            <person name="Fujii C.Y."/>
            <person name="Gill J.E."/>
            <person name="Goldsmith A.D."/>
            <person name="Haas B."/>
            <person name="Hansen N.F."/>
            <person name="Hughes B."/>
            <person name="Huizar L."/>
            <person name="Hunter J.L."/>
            <person name="Jenkins J."/>
            <person name="Johnson-Hopson C."/>
            <person name="Khan S."/>
            <person name="Khaykin E."/>
            <person name="Kim C.J."/>
            <person name="Koo H.L."/>
            <person name="Kremenetskaia I."/>
            <person name="Kurtz D.B."/>
            <person name="Kwan A."/>
            <person name="Lam B."/>
            <person name="Langin-Hooper S."/>
            <person name="Lee A."/>
            <person name="Lee J.M."/>
            <person name="Lenz C.A."/>
            <person name="Li J.H."/>
            <person name="Li Y.-P."/>
            <person name="Lin X."/>
            <person name="Liu S.X."/>
            <person name="Liu Z.A."/>
            <person name="Luros J.S."/>
            <person name="Maiti R."/>
            <person name="Marziali A."/>
            <person name="Militscher J."/>
            <person name="Miranda M."/>
            <person name="Nguyen M."/>
            <person name="Nierman W.C."/>
            <person name="Osborne B.I."/>
            <person name="Pai G."/>
            <person name="Peterson J."/>
            <person name="Pham P.K."/>
            <person name="Rizzo M."/>
            <person name="Rooney T."/>
            <person name="Rowley D."/>
            <person name="Sakano H."/>
            <person name="Salzberg S.L."/>
            <person name="Schwartz J.R."/>
            <person name="Shinn P."/>
            <person name="Southwick A.M."/>
            <person name="Sun H."/>
            <person name="Tallon L.J."/>
            <person name="Tambunga G."/>
            <person name="Toriumi M.J."/>
            <person name="Town C.D."/>
            <person name="Utterback T."/>
            <person name="Van Aken S."/>
            <person name="Vaysberg M."/>
            <person name="Vysotskaia V.S."/>
            <person name="Walker M."/>
            <person name="Wu D."/>
            <person name="Yu G."/>
            <person name="Fraser C.M."/>
            <person name="Venter J.C."/>
            <person name="Davis R.W."/>
        </authorList>
    </citation>
    <scope>NUCLEOTIDE SEQUENCE [LARGE SCALE GENOMIC DNA]</scope>
    <source>
        <strain evidence="3">cv. Columbia</strain>
    </source>
</reference>
<reference evidence="10 15" key="3">
    <citation type="journal article" date="2017" name="Plant J.">
        <title>Araport11: a complete reannotation of the Arabidopsis thaliana reference genome.</title>
        <authorList>
            <person name="Cheng C.Y."/>
            <person name="Krishnakumar V."/>
            <person name="Chan A.P."/>
            <person name="Thibaud-Nissen F."/>
            <person name="Schobel S."/>
            <person name="Town C.D."/>
        </authorList>
    </citation>
    <scope>GENOME REANNOTATION</scope>
    <source>
        <strain>cv. Columbia</strain>
    </source>
</reference>
<reference evidence="10 14" key="4">
    <citation type="journal article" date="2003" name="Science">
        <title>Empirical analysis of transcriptional activity in the Arabidopsis genome.</title>
        <authorList>
            <person name="Yamada K."/>
            <person name="Lim J."/>
            <person name="Dale J.M."/>
            <person name="Chen H."/>
            <person name="Shinn P."/>
            <person name="Palm C.J."/>
            <person name="Southwick A.M."/>
            <person name="Wu H.C."/>
            <person name="Kim C.J."/>
            <person name="Nguyen M."/>
            <person name="Pham P.K."/>
            <person name="Cheuk R.F."/>
            <person name="Karlin-Newmann G."/>
            <person name="Liu S.X."/>
            <person name="Lam B."/>
            <person name="Sakano H."/>
            <person name="Wu T."/>
            <person name="Yu G."/>
            <person name="Miranda M."/>
            <person name="Quach H.L."/>
            <person name="Tripp M."/>
            <person name="Chang C.H."/>
            <person name="Lee J.M."/>
            <person name="Toriumi M.J."/>
            <person name="Chan M.M."/>
            <person name="Tang C.C."/>
            <person name="Onodera C.S."/>
            <person name="Deng J.M."/>
            <person name="Akiyama K."/>
            <person name="Ansari Y."/>
            <person name="Arakawa T."/>
            <person name="Banh J."/>
            <person name="Banno F."/>
            <person name="Bowser L."/>
            <person name="Brooks S.Y."/>
            <person name="Carninci P."/>
            <person name="Chao Q."/>
            <person name="Choy N."/>
            <person name="Enju A."/>
            <person name="Goldsmith A.D."/>
            <person name="Gurjal M."/>
            <person name="Hansen N.F."/>
            <person name="Hayashizaki Y."/>
            <person name="Johnson-Hopson C."/>
            <person name="Hsuan V.W."/>
            <person name="Iida K."/>
            <person name="Karnes M."/>
            <person name="Khan S."/>
            <person name="Koesema E."/>
            <person name="Ishida J."/>
            <person name="Jiang P.X."/>
            <person name="Jones T."/>
            <person name="Kawai J."/>
            <person name="Kamiya A."/>
            <person name="Meyers C."/>
            <person name="Nakajima M."/>
            <person name="Narusaka M."/>
            <person name="Seki M."/>
            <person name="Sakurai T."/>
            <person name="Satou M."/>
            <person name="Tamse R."/>
            <person name="Vaysberg M."/>
            <person name="Wallender E.K."/>
            <person name="Wong C."/>
            <person name="Yamamura Y."/>
            <person name="Yuan S."/>
            <person name="Shinozaki K."/>
            <person name="Davis R.W."/>
            <person name="Theologis A."/>
            <person name="Ecker J.R."/>
        </authorList>
    </citation>
    <scope>NUCLEOTIDE SEQUENCE [LARGE SCALE MRNA]</scope>
    <source>
        <strain evidence="5">cv. Columbia</strain>
    </source>
</reference>
<reference evidence="10" key="5">
    <citation type="journal article" date="1997" name="J. Biol. Chem.">
        <title>Differential extraction and protein sequencing reveals major differences in patterns of primary cell wall proteins from plants.</title>
        <authorList>
            <person name="Robertson D."/>
            <person name="Mitchell G.P."/>
            <person name="Gilroy J.S."/>
            <person name="Gerrish C."/>
            <person name="Bolwell G.P."/>
            <person name="Slabas A.R."/>
        </authorList>
    </citation>
    <scope>PROTEIN SEQUENCE OF 28-36</scope>
    <scope>SUBCELLULAR LOCATION</scope>
    <source>
        <strain>cv. Landsberg erecta</strain>
    </source>
</reference>
<reference key="6">
    <citation type="journal article" date="2006" name="Plant Cell Physiol.">
        <title>Apoplastic glycosidases active against xyloglucan oligosaccharides of Arabidopsis thaliana.</title>
        <authorList>
            <person name="Iglesias N."/>
            <person name="Abelenda J.A."/>
            <person name="Rodino M."/>
            <person name="Sampedro J."/>
            <person name="Revilla G."/>
            <person name="Zarra I."/>
        </authorList>
    </citation>
    <scope>SUBCELLULAR LOCATION</scope>
    <scope>TISSUE SPECIFICITY</scope>
    <scope>DISRUPTION PHENOTYPE</scope>
</reference>
<reference key="7">
    <citation type="journal article" date="2010" name="Plant Physiol.">
        <title>Lack of alpha-xylosidase activity in Arabidopsis alters xyloglucan composition and results in growth defects.</title>
        <authorList>
            <person name="Sampedro J."/>
            <person name="Pardo B."/>
            <person name="Gianzo C."/>
            <person name="Guitian E."/>
            <person name="Revilla G."/>
            <person name="Zarra I."/>
        </authorList>
    </citation>
    <scope>FUNCTION</scope>
    <scope>TISSUE SPECIFICITY</scope>
    <scope>DISRUPTION PHENOTYPE</scope>
    <source>
        <strain>cv. Columbia</strain>
        <strain>cv. Wassilewskija</strain>
    </source>
</reference>
<reference key="8">
    <citation type="journal article" date="2011" name="Planta">
        <title>AXY3 encodes a alpha-xylosidase that impacts the structure and accessibility of the hemicellulose xyloglucan in Arabidopsis plant cell walls.</title>
        <authorList>
            <person name="Gunl M."/>
            <person name="Pauly M."/>
        </authorList>
    </citation>
    <scope>FUNCTION</scope>
    <scope>MUTAGENESIS OF GLU-630</scope>
    <scope>DISRUPTION PHENOTYPE</scope>
    <source>
        <strain>cv. Columbia</strain>
    </source>
</reference>
<protein>
    <recommendedName>
        <fullName>Alpha-xylosidase 1</fullName>
        <ecNumber>3.2.1.177</ecNumber>
    </recommendedName>
</protein>
<feature type="signal peptide" evidence="9">
    <location>
        <begin position="1"/>
        <end position="27"/>
    </location>
</feature>
<feature type="chain" id="PRO_0000042740" description="Alpha-xylosidase 1">
    <location>
        <begin position="28"/>
        <end position="915"/>
    </location>
</feature>
<feature type="active site" evidence="1">
    <location>
        <position position="440"/>
    </location>
</feature>
<feature type="active site" evidence="1">
    <location>
        <position position="443"/>
    </location>
</feature>
<feature type="active site" description="Proton donor" evidence="1">
    <location>
        <position position="563"/>
    </location>
</feature>
<feature type="glycosylation site" description="N-linked (GlcNAc...) asparagine" evidence="2">
    <location>
        <position position="153"/>
    </location>
</feature>
<feature type="glycosylation site" description="N-linked (GlcNAc...) asparagine" evidence="2">
    <location>
        <position position="304"/>
    </location>
</feature>
<feature type="glycosylation site" description="N-linked (GlcNAc...) asparagine" evidence="2">
    <location>
        <position position="375"/>
    </location>
</feature>
<feature type="glycosylation site" description="N-linked (GlcNAc...) asparagine" evidence="2">
    <location>
        <position position="476"/>
    </location>
</feature>
<feature type="glycosylation site" description="N-linked (GlcNAc...) asparagine" evidence="2">
    <location>
        <position position="490"/>
    </location>
</feature>
<feature type="glycosylation site" description="N-linked (GlcNAc...) asparagine" evidence="2">
    <location>
        <position position="819"/>
    </location>
</feature>
<feature type="glycosylation site" description="N-linked (GlcNAc...) asparagine" evidence="2">
    <location>
        <position position="888"/>
    </location>
</feature>
<feature type="glycosylation site" description="N-linked (GlcNAc...) asparagine" evidence="2">
    <location>
        <position position="907"/>
    </location>
</feature>
<feature type="mutagenesis site" description="In axy3.1; Loss of activity and altered xyloglucan composition." evidence="8">
    <original>E</original>
    <variation>K</variation>
    <location>
        <position position="630"/>
    </location>
</feature>
<evidence type="ECO:0000250" key="1">
    <source>
        <dbReference type="UniProtKB" id="O04931"/>
    </source>
</evidence>
<evidence type="ECO:0000255" key="2"/>
<evidence type="ECO:0000269" key="3">
    <source>
    </source>
</evidence>
<evidence type="ECO:0000269" key="4">
    <source>
    </source>
</evidence>
<evidence type="ECO:0000269" key="5">
    <source>
    </source>
</evidence>
<evidence type="ECO:0000269" key="6">
    <source>
    </source>
</evidence>
<evidence type="ECO:0000269" key="7">
    <source>
    </source>
</evidence>
<evidence type="ECO:0000269" key="8">
    <source>
    </source>
</evidence>
<evidence type="ECO:0000269" key="9">
    <source>
    </source>
</evidence>
<evidence type="ECO:0000305" key="10"/>
<evidence type="ECO:0000312" key="11">
    <source>
        <dbReference type="EMBL" id="AAD05539.1"/>
    </source>
</evidence>
<evidence type="ECO:0000312" key="12">
    <source>
        <dbReference type="EMBL" id="AAD37363.1"/>
    </source>
</evidence>
<evidence type="ECO:0000312" key="13">
    <source>
        <dbReference type="EMBL" id="AAD49987.1"/>
    </source>
</evidence>
<evidence type="ECO:0000312" key="14">
    <source>
        <dbReference type="EMBL" id="AAL09716.1"/>
    </source>
</evidence>
<evidence type="ECO:0000312" key="15">
    <source>
        <dbReference type="EMBL" id="AAO11591.1"/>
    </source>
</evidence>